<dbReference type="EMBL" id="CP000721">
    <property type="protein sequence ID" value="ABR32357.1"/>
    <property type="molecule type" value="Genomic_DNA"/>
</dbReference>
<dbReference type="RefSeq" id="WP_011967522.1">
    <property type="nucleotide sequence ID" value="NC_009617.1"/>
</dbReference>
<dbReference type="SMR" id="A6LPS7"/>
<dbReference type="GeneID" id="66343057"/>
<dbReference type="KEGG" id="cbe:Cbei_0167"/>
<dbReference type="eggNOG" id="COG0256">
    <property type="taxonomic scope" value="Bacteria"/>
</dbReference>
<dbReference type="HOGENOM" id="CLU_098841_0_1_9"/>
<dbReference type="Proteomes" id="UP000000565">
    <property type="component" value="Chromosome"/>
</dbReference>
<dbReference type="GO" id="GO:0022625">
    <property type="term" value="C:cytosolic large ribosomal subunit"/>
    <property type="evidence" value="ECO:0007669"/>
    <property type="project" value="TreeGrafter"/>
</dbReference>
<dbReference type="GO" id="GO:0008097">
    <property type="term" value="F:5S rRNA binding"/>
    <property type="evidence" value="ECO:0007669"/>
    <property type="project" value="TreeGrafter"/>
</dbReference>
<dbReference type="GO" id="GO:0003735">
    <property type="term" value="F:structural constituent of ribosome"/>
    <property type="evidence" value="ECO:0007669"/>
    <property type="project" value="InterPro"/>
</dbReference>
<dbReference type="GO" id="GO:0006412">
    <property type="term" value="P:translation"/>
    <property type="evidence" value="ECO:0007669"/>
    <property type="project" value="UniProtKB-UniRule"/>
</dbReference>
<dbReference type="CDD" id="cd00432">
    <property type="entry name" value="Ribosomal_L18_L5e"/>
    <property type="match status" value="1"/>
</dbReference>
<dbReference type="FunFam" id="3.30.420.100:FF:000001">
    <property type="entry name" value="50S ribosomal protein L18"/>
    <property type="match status" value="1"/>
</dbReference>
<dbReference type="Gene3D" id="3.30.420.100">
    <property type="match status" value="1"/>
</dbReference>
<dbReference type="HAMAP" id="MF_01337_B">
    <property type="entry name" value="Ribosomal_uL18_B"/>
    <property type="match status" value="1"/>
</dbReference>
<dbReference type="InterPro" id="IPR004389">
    <property type="entry name" value="Ribosomal_uL18_bac-type"/>
</dbReference>
<dbReference type="InterPro" id="IPR005484">
    <property type="entry name" value="Ribosomal_uL18_bac/euk"/>
</dbReference>
<dbReference type="NCBIfam" id="TIGR00060">
    <property type="entry name" value="L18_bact"/>
    <property type="match status" value="1"/>
</dbReference>
<dbReference type="PANTHER" id="PTHR12899">
    <property type="entry name" value="39S RIBOSOMAL PROTEIN L18, MITOCHONDRIAL"/>
    <property type="match status" value="1"/>
</dbReference>
<dbReference type="PANTHER" id="PTHR12899:SF3">
    <property type="entry name" value="LARGE RIBOSOMAL SUBUNIT PROTEIN UL18M"/>
    <property type="match status" value="1"/>
</dbReference>
<dbReference type="Pfam" id="PF00861">
    <property type="entry name" value="Ribosomal_L18p"/>
    <property type="match status" value="1"/>
</dbReference>
<dbReference type="SUPFAM" id="SSF53137">
    <property type="entry name" value="Translational machinery components"/>
    <property type="match status" value="1"/>
</dbReference>
<feature type="chain" id="PRO_1000086657" description="Large ribosomal subunit protein uL18">
    <location>
        <begin position="1"/>
        <end position="119"/>
    </location>
</feature>
<name>RL18_CLOB8</name>
<evidence type="ECO:0000255" key="1">
    <source>
        <dbReference type="HAMAP-Rule" id="MF_01337"/>
    </source>
</evidence>
<evidence type="ECO:0000305" key="2"/>
<organism>
    <name type="scientific">Clostridium beijerinckii (strain ATCC 51743 / NCIMB 8052)</name>
    <name type="common">Clostridium acetobutylicum</name>
    <dbReference type="NCBI Taxonomy" id="290402"/>
    <lineage>
        <taxon>Bacteria</taxon>
        <taxon>Bacillati</taxon>
        <taxon>Bacillota</taxon>
        <taxon>Clostridia</taxon>
        <taxon>Eubacteriales</taxon>
        <taxon>Clostridiaceae</taxon>
        <taxon>Clostridium</taxon>
    </lineage>
</organism>
<comment type="function">
    <text evidence="1">This is one of the proteins that bind and probably mediate the attachment of the 5S RNA into the large ribosomal subunit, where it forms part of the central protuberance.</text>
</comment>
<comment type="subunit">
    <text evidence="1">Part of the 50S ribosomal subunit; part of the 5S rRNA/L5/L18/L25 subcomplex. Contacts the 5S and 23S rRNAs.</text>
</comment>
<comment type="similarity">
    <text evidence="1">Belongs to the universal ribosomal protein uL18 family.</text>
</comment>
<gene>
    <name evidence="1" type="primary">rplR</name>
    <name type="ordered locus">Cbei_0167</name>
</gene>
<protein>
    <recommendedName>
        <fullName evidence="1">Large ribosomal subunit protein uL18</fullName>
    </recommendedName>
    <alternativeName>
        <fullName evidence="2">50S ribosomal protein L18</fullName>
    </alternativeName>
</protein>
<keyword id="KW-0687">Ribonucleoprotein</keyword>
<keyword id="KW-0689">Ribosomal protein</keyword>
<keyword id="KW-0694">RNA-binding</keyword>
<keyword id="KW-0699">rRNA-binding</keyword>
<reference key="1">
    <citation type="submission" date="2007-06" db="EMBL/GenBank/DDBJ databases">
        <title>Complete sequence of Clostridium beijerinckii NCIMB 8052.</title>
        <authorList>
            <consortium name="US DOE Joint Genome Institute"/>
            <person name="Copeland A."/>
            <person name="Lucas S."/>
            <person name="Lapidus A."/>
            <person name="Barry K."/>
            <person name="Detter J.C."/>
            <person name="Glavina del Rio T."/>
            <person name="Hammon N."/>
            <person name="Israni S."/>
            <person name="Dalin E."/>
            <person name="Tice H."/>
            <person name="Pitluck S."/>
            <person name="Sims D."/>
            <person name="Brettin T."/>
            <person name="Bruce D."/>
            <person name="Tapia R."/>
            <person name="Brainard J."/>
            <person name="Schmutz J."/>
            <person name="Larimer F."/>
            <person name="Land M."/>
            <person name="Hauser L."/>
            <person name="Kyrpides N."/>
            <person name="Mikhailova N."/>
            <person name="Bennet G."/>
            <person name="Cann I."/>
            <person name="Chen J.-S."/>
            <person name="Contreras A.L."/>
            <person name="Jones D."/>
            <person name="Kashket E."/>
            <person name="Mitchell W."/>
            <person name="Stoddard S."/>
            <person name="Schwarz W."/>
            <person name="Qureshi N."/>
            <person name="Young M."/>
            <person name="Shi Z."/>
            <person name="Ezeji T."/>
            <person name="White B."/>
            <person name="Blaschek H."/>
            <person name="Richardson P."/>
        </authorList>
    </citation>
    <scope>NUCLEOTIDE SEQUENCE [LARGE SCALE GENOMIC DNA]</scope>
    <source>
        <strain>ATCC 51743 / NCIMB 8052</strain>
    </source>
</reference>
<accession>A6LPS7</accession>
<sequence length="119" mass="13204">MFKKVDKKASREKRHLRVRKKVFGTAERPRLSVFKSEKNIYAQVIDDINGVTLVAASSLEKDFAAKGGNKEGAKLVGELVAKKAIEKGIDVVVFDRGGYIYHGRIQELAQAAREAGLKF</sequence>
<proteinExistence type="inferred from homology"/>